<gene>
    <name evidence="1" type="primary">gmhA</name>
    <name type="ordered locus">RoseRS_2381</name>
</gene>
<evidence type="ECO:0000255" key="1">
    <source>
        <dbReference type="HAMAP-Rule" id="MF_00067"/>
    </source>
</evidence>
<accession>A5UVV6</accession>
<feature type="chain" id="PRO_1000075102" description="Phosphoheptose isomerase">
    <location>
        <begin position="1"/>
        <end position="197"/>
    </location>
</feature>
<feature type="domain" description="SIS" evidence="1">
    <location>
        <begin position="41"/>
        <end position="197"/>
    </location>
</feature>
<feature type="binding site" evidence="1">
    <location>
        <begin position="56"/>
        <end position="58"/>
    </location>
    <ligand>
        <name>substrate</name>
    </ligand>
</feature>
<feature type="binding site" evidence="1">
    <location>
        <position position="65"/>
    </location>
    <ligand>
        <name>Zn(2+)</name>
        <dbReference type="ChEBI" id="CHEBI:29105"/>
    </ligand>
</feature>
<feature type="binding site" evidence="1">
    <location>
        <position position="69"/>
    </location>
    <ligand>
        <name>substrate</name>
    </ligand>
</feature>
<feature type="binding site" evidence="1">
    <location>
        <position position="69"/>
    </location>
    <ligand>
        <name>Zn(2+)</name>
        <dbReference type="ChEBI" id="CHEBI:29105"/>
    </ligand>
</feature>
<feature type="binding site" evidence="1">
    <location>
        <begin position="98"/>
        <end position="99"/>
    </location>
    <ligand>
        <name>substrate</name>
    </ligand>
</feature>
<feature type="binding site" evidence="1">
    <location>
        <begin position="124"/>
        <end position="126"/>
    </location>
    <ligand>
        <name>substrate</name>
    </ligand>
</feature>
<feature type="binding site" evidence="1">
    <location>
        <position position="129"/>
    </location>
    <ligand>
        <name>substrate</name>
    </ligand>
</feature>
<feature type="binding site" evidence="1">
    <location>
        <position position="176"/>
    </location>
    <ligand>
        <name>substrate</name>
    </ligand>
</feature>
<feature type="binding site" evidence="1">
    <location>
        <position position="176"/>
    </location>
    <ligand>
        <name>Zn(2+)</name>
        <dbReference type="ChEBI" id="CHEBI:29105"/>
    </ligand>
</feature>
<feature type="binding site" evidence="1">
    <location>
        <position position="184"/>
    </location>
    <ligand>
        <name>Zn(2+)</name>
        <dbReference type="ChEBI" id="CHEBI:29105"/>
    </ligand>
</feature>
<dbReference type="EC" id="5.3.1.28" evidence="1"/>
<dbReference type="EMBL" id="CP000686">
    <property type="protein sequence ID" value="ABQ90759.1"/>
    <property type="molecule type" value="Genomic_DNA"/>
</dbReference>
<dbReference type="RefSeq" id="WP_011957104.1">
    <property type="nucleotide sequence ID" value="NC_009523.1"/>
</dbReference>
<dbReference type="SMR" id="A5UVV6"/>
<dbReference type="STRING" id="357808.RoseRS_2381"/>
<dbReference type="KEGG" id="rrs:RoseRS_2381"/>
<dbReference type="eggNOG" id="COG0279">
    <property type="taxonomic scope" value="Bacteria"/>
</dbReference>
<dbReference type="HOGENOM" id="CLU_080999_0_1_0"/>
<dbReference type="OrthoDB" id="9781311at2"/>
<dbReference type="UniPathway" id="UPA00041">
    <property type="reaction ID" value="UER00436"/>
</dbReference>
<dbReference type="Proteomes" id="UP000006554">
    <property type="component" value="Chromosome"/>
</dbReference>
<dbReference type="GO" id="GO:0005737">
    <property type="term" value="C:cytoplasm"/>
    <property type="evidence" value="ECO:0007669"/>
    <property type="project" value="UniProtKB-SubCell"/>
</dbReference>
<dbReference type="GO" id="GO:0097367">
    <property type="term" value="F:carbohydrate derivative binding"/>
    <property type="evidence" value="ECO:0007669"/>
    <property type="project" value="InterPro"/>
</dbReference>
<dbReference type="GO" id="GO:0008968">
    <property type="term" value="F:D-sedoheptulose 7-phosphate isomerase activity"/>
    <property type="evidence" value="ECO:0007669"/>
    <property type="project" value="UniProtKB-UniRule"/>
</dbReference>
<dbReference type="GO" id="GO:0008270">
    <property type="term" value="F:zinc ion binding"/>
    <property type="evidence" value="ECO:0007669"/>
    <property type="project" value="UniProtKB-UniRule"/>
</dbReference>
<dbReference type="GO" id="GO:0005975">
    <property type="term" value="P:carbohydrate metabolic process"/>
    <property type="evidence" value="ECO:0007669"/>
    <property type="project" value="UniProtKB-UniRule"/>
</dbReference>
<dbReference type="GO" id="GO:2001061">
    <property type="term" value="P:D-glycero-D-manno-heptose 7-phosphate biosynthetic process"/>
    <property type="evidence" value="ECO:0007669"/>
    <property type="project" value="UniProtKB-UniPathway"/>
</dbReference>
<dbReference type="CDD" id="cd05006">
    <property type="entry name" value="SIS_GmhA"/>
    <property type="match status" value="1"/>
</dbReference>
<dbReference type="Gene3D" id="3.40.50.10490">
    <property type="entry name" value="Glucose-6-phosphate isomerase like protein, domain 1"/>
    <property type="match status" value="1"/>
</dbReference>
<dbReference type="HAMAP" id="MF_00067">
    <property type="entry name" value="GmhA"/>
    <property type="match status" value="1"/>
</dbReference>
<dbReference type="InterPro" id="IPR035461">
    <property type="entry name" value="GmhA/DiaA"/>
</dbReference>
<dbReference type="InterPro" id="IPR004515">
    <property type="entry name" value="Phosphoheptose_Isoase"/>
</dbReference>
<dbReference type="InterPro" id="IPR001347">
    <property type="entry name" value="SIS_dom"/>
</dbReference>
<dbReference type="InterPro" id="IPR046348">
    <property type="entry name" value="SIS_dom_sf"/>
</dbReference>
<dbReference type="InterPro" id="IPR050099">
    <property type="entry name" value="SIS_GmhA/DiaA_subfam"/>
</dbReference>
<dbReference type="NCBIfam" id="TIGR00441">
    <property type="entry name" value="gmhA"/>
    <property type="match status" value="1"/>
</dbReference>
<dbReference type="PANTHER" id="PTHR30390:SF6">
    <property type="entry name" value="DNAA INITIATOR-ASSOCIATING PROTEIN DIAA"/>
    <property type="match status" value="1"/>
</dbReference>
<dbReference type="PANTHER" id="PTHR30390">
    <property type="entry name" value="SEDOHEPTULOSE 7-PHOSPHATE ISOMERASE / DNAA INITIATOR-ASSOCIATING FACTOR FOR REPLICATION INITIATION"/>
    <property type="match status" value="1"/>
</dbReference>
<dbReference type="Pfam" id="PF13580">
    <property type="entry name" value="SIS_2"/>
    <property type="match status" value="1"/>
</dbReference>
<dbReference type="SUPFAM" id="SSF53697">
    <property type="entry name" value="SIS domain"/>
    <property type="match status" value="1"/>
</dbReference>
<dbReference type="PROSITE" id="PS51464">
    <property type="entry name" value="SIS"/>
    <property type="match status" value="1"/>
</dbReference>
<name>GMHA_ROSS1</name>
<comment type="function">
    <text evidence="1">Catalyzes the isomerization of sedoheptulose 7-phosphate in D-glycero-D-manno-heptose 7-phosphate.</text>
</comment>
<comment type="catalytic activity">
    <reaction evidence="1">
        <text>2 D-sedoheptulose 7-phosphate = D-glycero-alpha-D-manno-heptose 7-phosphate + D-glycero-beta-D-manno-heptose 7-phosphate</text>
        <dbReference type="Rhea" id="RHEA:27489"/>
        <dbReference type="ChEBI" id="CHEBI:57483"/>
        <dbReference type="ChEBI" id="CHEBI:60203"/>
        <dbReference type="ChEBI" id="CHEBI:60204"/>
        <dbReference type="EC" id="5.3.1.28"/>
    </reaction>
</comment>
<comment type="cofactor">
    <cofactor evidence="1">
        <name>Zn(2+)</name>
        <dbReference type="ChEBI" id="CHEBI:29105"/>
    </cofactor>
    <text evidence="1">Binds 1 zinc ion per subunit.</text>
</comment>
<comment type="pathway">
    <text evidence="1">Carbohydrate biosynthesis; D-glycero-D-manno-heptose 7-phosphate biosynthesis; D-glycero-alpha-D-manno-heptose 7-phosphate and D-glycero-beta-D-manno-heptose 7-phosphate from sedoheptulose 7-phosphate: step 1/1.</text>
</comment>
<comment type="subcellular location">
    <subcellularLocation>
        <location evidence="1">Cytoplasm</location>
    </subcellularLocation>
</comment>
<comment type="miscellaneous">
    <text evidence="1">The reaction produces a racemic mixture of D-glycero-alpha-D-manno-heptose 7-phosphate and D-glycero-beta-D-manno-heptose 7-phosphate.</text>
</comment>
<comment type="similarity">
    <text evidence="1">Belongs to the SIS family. GmhA subfamily.</text>
</comment>
<organism>
    <name type="scientific">Roseiflexus sp. (strain RS-1)</name>
    <dbReference type="NCBI Taxonomy" id="357808"/>
    <lineage>
        <taxon>Bacteria</taxon>
        <taxon>Bacillati</taxon>
        <taxon>Chloroflexota</taxon>
        <taxon>Chloroflexia</taxon>
        <taxon>Chloroflexales</taxon>
        <taxon>Roseiflexineae</taxon>
        <taxon>Roseiflexaceae</taxon>
        <taxon>Roseiflexus</taxon>
    </lineage>
</organism>
<protein>
    <recommendedName>
        <fullName evidence="1">Phosphoheptose isomerase</fullName>
        <ecNumber evidence="1">5.3.1.28</ecNumber>
    </recommendedName>
    <alternativeName>
        <fullName evidence="1">Sedoheptulose 7-phosphate isomerase</fullName>
    </alternativeName>
</protein>
<reference key="1">
    <citation type="submission" date="2007-04" db="EMBL/GenBank/DDBJ databases">
        <title>Complete sequence of Roseiflexus sp. RS-1.</title>
        <authorList>
            <consortium name="US DOE Joint Genome Institute"/>
            <person name="Copeland A."/>
            <person name="Lucas S."/>
            <person name="Lapidus A."/>
            <person name="Barry K."/>
            <person name="Detter J.C."/>
            <person name="Glavina del Rio T."/>
            <person name="Hammon N."/>
            <person name="Israni S."/>
            <person name="Dalin E."/>
            <person name="Tice H."/>
            <person name="Pitluck S."/>
            <person name="Chertkov O."/>
            <person name="Brettin T."/>
            <person name="Bruce D."/>
            <person name="Han C."/>
            <person name="Schmutz J."/>
            <person name="Larimer F."/>
            <person name="Land M."/>
            <person name="Hauser L."/>
            <person name="Kyrpides N."/>
            <person name="Mikhailova N."/>
            <person name="Bryant D.A."/>
            <person name="Richardson P."/>
        </authorList>
    </citation>
    <scope>NUCLEOTIDE SEQUENCE [LARGE SCALE GENOMIC DNA]</scope>
    <source>
        <strain>RS-1</strain>
    </source>
</reference>
<keyword id="KW-0119">Carbohydrate metabolism</keyword>
<keyword id="KW-0963">Cytoplasm</keyword>
<keyword id="KW-0413">Isomerase</keyword>
<keyword id="KW-0479">Metal-binding</keyword>
<keyword id="KW-0862">Zinc</keyword>
<proteinExistence type="inferred from homology"/>
<sequence>MNSPSDSFTRWVIDEIEASIDVKRRTIETQAPMIVAIAERVVETFRRGGKLLLCGNGGSAADAQHIAAEFVSRFRRERHGLPAIALTTDTSILTAISNDYGYERVFARQVEALGRPGDMVIGISTSGISASVIAAMRAARNGGMATVGFTGASGGTLVDHVDLCLCVPSHNTARIQEVHITVAHVVCEIVERTLFEE</sequence>